<gene>
    <name evidence="1" type="primary">pnp</name>
    <name type="ordered locus">CFPG_469</name>
</gene>
<accession>B6YRB0</accession>
<feature type="chain" id="PRO_1000147882" description="Polyribonucleotide nucleotidyltransferase">
    <location>
        <begin position="1"/>
        <end position="719"/>
    </location>
</feature>
<feature type="domain" description="KH" evidence="1">
    <location>
        <begin position="557"/>
        <end position="619"/>
    </location>
</feature>
<feature type="domain" description="S1 motif" evidence="1">
    <location>
        <begin position="629"/>
        <end position="699"/>
    </location>
</feature>
<feature type="binding site" evidence="1">
    <location>
        <position position="490"/>
    </location>
    <ligand>
        <name>Mg(2+)</name>
        <dbReference type="ChEBI" id="CHEBI:18420"/>
    </ligand>
</feature>
<feature type="binding site" evidence="1">
    <location>
        <position position="496"/>
    </location>
    <ligand>
        <name>Mg(2+)</name>
        <dbReference type="ChEBI" id="CHEBI:18420"/>
    </ligand>
</feature>
<evidence type="ECO:0000255" key="1">
    <source>
        <dbReference type="HAMAP-Rule" id="MF_01595"/>
    </source>
</evidence>
<proteinExistence type="inferred from homology"/>
<dbReference type="EC" id="2.7.7.8" evidence="1"/>
<dbReference type="EMBL" id="AP010656">
    <property type="protein sequence ID" value="BAG83732.1"/>
    <property type="molecule type" value="Genomic_DNA"/>
</dbReference>
<dbReference type="RefSeq" id="WP_012573493.1">
    <property type="nucleotide sequence ID" value="NC_011565.1"/>
</dbReference>
<dbReference type="SMR" id="B6YRB0"/>
<dbReference type="STRING" id="511995.CFPG_469"/>
<dbReference type="KEGG" id="aps:CFPG_469"/>
<dbReference type="eggNOG" id="COG1185">
    <property type="taxonomic scope" value="Bacteria"/>
</dbReference>
<dbReference type="HOGENOM" id="CLU_004217_2_2_10"/>
<dbReference type="OrthoDB" id="9804305at2"/>
<dbReference type="Proteomes" id="UP000000723">
    <property type="component" value="Chromosome"/>
</dbReference>
<dbReference type="GO" id="GO:0005829">
    <property type="term" value="C:cytosol"/>
    <property type="evidence" value="ECO:0007669"/>
    <property type="project" value="TreeGrafter"/>
</dbReference>
<dbReference type="GO" id="GO:0000175">
    <property type="term" value="F:3'-5'-RNA exonuclease activity"/>
    <property type="evidence" value="ECO:0007669"/>
    <property type="project" value="TreeGrafter"/>
</dbReference>
<dbReference type="GO" id="GO:0000287">
    <property type="term" value="F:magnesium ion binding"/>
    <property type="evidence" value="ECO:0007669"/>
    <property type="project" value="UniProtKB-UniRule"/>
</dbReference>
<dbReference type="GO" id="GO:0004654">
    <property type="term" value="F:polyribonucleotide nucleotidyltransferase activity"/>
    <property type="evidence" value="ECO:0007669"/>
    <property type="project" value="UniProtKB-UniRule"/>
</dbReference>
<dbReference type="GO" id="GO:0003723">
    <property type="term" value="F:RNA binding"/>
    <property type="evidence" value="ECO:0007669"/>
    <property type="project" value="UniProtKB-UniRule"/>
</dbReference>
<dbReference type="GO" id="GO:0006402">
    <property type="term" value="P:mRNA catabolic process"/>
    <property type="evidence" value="ECO:0007669"/>
    <property type="project" value="UniProtKB-UniRule"/>
</dbReference>
<dbReference type="GO" id="GO:0006396">
    <property type="term" value="P:RNA processing"/>
    <property type="evidence" value="ECO:0007669"/>
    <property type="project" value="InterPro"/>
</dbReference>
<dbReference type="CDD" id="cd02393">
    <property type="entry name" value="KH-I_PNPase"/>
    <property type="match status" value="1"/>
</dbReference>
<dbReference type="CDD" id="cd11363">
    <property type="entry name" value="RNase_PH_PNPase_1"/>
    <property type="match status" value="1"/>
</dbReference>
<dbReference type="CDD" id="cd11364">
    <property type="entry name" value="RNase_PH_PNPase_2"/>
    <property type="match status" value="1"/>
</dbReference>
<dbReference type="FunFam" id="3.30.1370.10:FF:000001">
    <property type="entry name" value="Polyribonucleotide nucleotidyltransferase"/>
    <property type="match status" value="1"/>
</dbReference>
<dbReference type="FunFam" id="3.30.230.70:FF:000001">
    <property type="entry name" value="Polyribonucleotide nucleotidyltransferase"/>
    <property type="match status" value="1"/>
</dbReference>
<dbReference type="FunFam" id="3.30.230.70:FF:000002">
    <property type="entry name" value="Polyribonucleotide nucleotidyltransferase"/>
    <property type="match status" value="1"/>
</dbReference>
<dbReference type="Gene3D" id="3.30.230.70">
    <property type="entry name" value="GHMP Kinase, N-terminal domain"/>
    <property type="match status" value="2"/>
</dbReference>
<dbReference type="Gene3D" id="3.30.1370.10">
    <property type="entry name" value="K Homology domain, type 1"/>
    <property type="match status" value="1"/>
</dbReference>
<dbReference type="Gene3D" id="2.40.50.140">
    <property type="entry name" value="Nucleic acid-binding proteins"/>
    <property type="match status" value="1"/>
</dbReference>
<dbReference type="HAMAP" id="MF_01595">
    <property type="entry name" value="PNPase"/>
    <property type="match status" value="1"/>
</dbReference>
<dbReference type="InterPro" id="IPR001247">
    <property type="entry name" value="ExoRNase_PH_dom1"/>
</dbReference>
<dbReference type="InterPro" id="IPR015847">
    <property type="entry name" value="ExoRNase_PH_dom2"/>
</dbReference>
<dbReference type="InterPro" id="IPR036345">
    <property type="entry name" value="ExoRNase_PH_dom2_sf"/>
</dbReference>
<dbReference type="InterPro" id="IPR004087">
    <property type="entry name" value="KH_dom"/>
</dbReference>
<dbReference type="InterPro" id="IPR004088">
    <property type="entry name" value="KH_dom_type_1"/>
</dbReference>
<dbReference type="InterPro" id="IPR036612">
    <property type="entry name" value="KH_dom_type_1_sf"/>
</dbReference>
<dbReference type="InterPro" id="IPR012340">
    <property type="entry name" value="NA-bd_OB-fold"/>
</dbReference>
<dbReference type="InterPro" id="IPR012162">
    <property type="entry name" value="PNPase"/>
</dbReference>
<dbReference type="InterPro" id="IPR027408">
    <property type="entry name" value="PNPase/RNase_PH_dom_sf"/>
</dbReference>
<dbReference type="InterPro" id="IPR015848">
    <property type="entry name" value="PNPase_PH_RNA-bd_bac/org-type"/>
</dbReference>
<dbReference type="InterPro" id="IPR020568">
    <property type="entry name" value="Ribosomal_Su5_D2-typ_SF"/>
</dbReference>
<dbReference type="InterPro" id="IPR003029">
    <property type="entry name" value="S1_domain"/>
</dbReference>
<dbReference type="NCBIfam" id="TIGR03591">
    <property type="entry name" value="polynuc_phos"/>
    <property type="match status" value="1"/>
</dbReference>
<dbReference type="NCBIfam" id="NF008805">
    <property type="entry name" value="PRK11824.1"/>
    <property type="match status" value="1"/>
</dbReference>
<dbReference type="PANTHER" id="PTHR11252">
    <property type="entry name" value="POLYRIBONUCLEOTIDE NUCLEOTIDYLTRANSFERASE"/>
    <property type="match status" value="1"/>
</dbReference>
<dbReference type="PANTHER" id="PTHR11252:SF0">
    <property type="entry name" value="POLYRIBONUCLEOTIDE NUCLEOTIDYLTRANSFERASE 1, MITOCHONDRIAL"/>
    <property type="match status" value="1"/>
</dbReference>
<dbReference type="Pfam" id="PF00013">
    <property type="entry name" value="KH_1"/>
    <property type="match status" value="1"/>
</dbReference>
<dbReference type="Pfam" id="PF03726">
    <property type="entry name" value="PNPase"/>
    <property type="match status" value="1"/>
</dbReference>
<dbReference type="Pfam" id="PF01138">
    <property type="entry name" value="RNase_PH"/>
    <property type="match status" value="2"/>
</dbReference>
<dbReference type="Pfam" id="PF03725">
    <property type="entry name" value="RNase_PH_C"/>
    <property type="match status" value="2"/>
</dbReference>
<dbReference type="Pfam" id="PF00575">
    <property type="entry name" value="S1"/>
    <property type="match status" value="1"/>
</dbReference>
<dbReference type="PIRSF" id="PIRSF005499">
    <property type="entry name" value="PNPase"/>
    <property type="match status" value="1"/>
</dbReference>
<dbReference type="SMART" id="SM00322">
    <property type="entry name" value="KH"/>
    <property type="match status" value="1"/>
</dbReference>
<dbReference type="SMART" id="SM00316">
    <property type="entry name" value="S1"/>
    <property type="match status" value="1"/>
</dbReference>
<dbReference type="SUPFAM" id="SSF54791">
    <property type="entry name" value="Eukaryotic type KH-domain (KH-domain type I)"/>
    <property type="match status" value="1"/>
</dbReference>
<dbReference type="SUPFAM" id="SSF50249">
    <property type="entry name" value="Nucleic acid-binding proteins"/>
    <property type="match status" value="1"/>
</dbReference>
<dbReference type="SUPFAM" id="SSF55666">
    <property type="entry name" value="Ribonuclease PH domain 2-like"/>
    <property type="match status" value="2"/>
</dbReference>
<dbReference type="SUPFAM" id="SSF54211">
    <property type="entry name" value="Ribosomal protein S5 domain 2-like"/>
    <property type="match status" value="2"/>
</dbReference>
<dbReference type="PROSITE" id="PS50084">
    <property type="entry name" value="KH_TYPE_1"/>
    <property type="match status" value="1"/>
</dbReference>
<dbReference type="PROSITE" id="PS50126">
    <property type="entry name" value="S1"/>
    <property type="match status" value="1"/>
</dbReference>
<reference key="1">
    <citation type="journal article" date="2008" name="Science">
        <title>Genome of an endosymbiont coupling N2 fixation to cellulolysis within RT protist cells in termite gut.</title>
        <authorList>
            <person name="Hongoh Y."/>
            <person name="Sharma V.K."/>
            <person name="Prakash T."/>
            <person name="Noda S."/>
            <person name="Toh H."/>
            <person name="Taylor T.D."/>
            <person name="Kudo T."/>
            <person name="Sakaki Y."/>
            <person name="Toyoda A."/>
            <person name="Hattori M."/>
            <person name="Ohkuma M."/>
        </authorList>
    </citation>
    <scope>NUCLEOTIDE SEQUENCE [LARGE SCALE GENOMIC DNA]</scope>
</reference>
<comment type="function">
    <text evidence="1">Involved in mRNA degradation. Catalyzes the phosphorolysis of single-stranded polyribonucleotides processively in the 3'- to 5'-direction.</text>
</comment>
<comment type="catalytic activity">
    <reaction evidence="1">
        <text>RNA(n+1) + phosphate = RNA(n) + a ribonucleoside 5'-diphosphate</text>
        <dbReference type="Rhea" id="RHEA:22096"/>
        <dbReference type="Rhea" id="RHEA-COMP:14527"/>
        <dbReference type="Rhea" id="RHEA-COMP:17342"/>
        <dbReference type="ChEBI" id="CHEBI:43474"/>
        <dbReference type="ChEBI" id="CHEBI:57930"/>
        <dbReference type="ChEBI" id="CHEBI:140395"/>
        <dbReference type="EC" id="2.7.7.8"/>
    </reaction>
</comment>
<comment type="cofactor">
    <cofactor evidence="1">
        <name>Mg(2+)</name>
        <dbReference type="ChEBI" id="CHEBI:18420"/>
    </cofactor>
</comment>
<comment type="subcellular location">
    <subcellularLocation>
        <location evidence="1">Cytoplasm</location>
    </subcellularLocation>
</comment>
<comment type="similarity">
    <text evidence="1">Belongs to the polyribonucleotide nucleotidyltransferase family.</text>
</comment>
<sequence length="719" mass="80337">MINSIIKTIDLGDGRTITLETGKLAKQADGAIVLRMNNTMILATVCVAKDTNPCVDFLPLQVEYKEKFSAFGRFPGGFTKREGRASDYEILTCRLIDRTLRPLFPRDYHSEVFVNIILFSSDGEDIPDALAGLAASAALSVSTIPFNGPISEVRVARIDGKFKINPTFGELAKADMDIMVGATADNIMMVEGEMNEVSEEEMLEAIKAAHEAIKPQCKAQIELARIVGTTIKNTYSHEVNDEELRSDIKTKLYDKVYAVAKSGQCKNKRIEAFQTIIEEYKKQFKEKELSEEKIFLIKRYYYEIEKEVMRRCILDENIRIDGRKTTEIRPIWSEVNPITGPHGSAIFTRGETQALATVTLGTKLNEKIIDDVLINDKERFLLHYNFPPFATGEARAQRGIGRREIGHGNLAHRALKPIIPNNYPYVIRVVSDILESNGSSSMATVCAGTLSLMDAGVQIKRPVSGIAMGLIFEKEGSKYAILSDILGDEDHLGDMDFKVAGTKKGITATQMDIKIDGLSYEVLERALSQAKQGREYILDKMLETIPEPRTDLKPHTPKIEIIIIPKEFIGSVIGPGGKIIQRLQEETGTTITIEEIEKMGRIEIFGDNKKSIDAALTRIKGIVSVPEVGEIYEGKIRSIMPYGAFIEFLPGKEGLLHISEISWKHLESIEEAGLNEGDFIKIKLVDIDSKTGKFKLSHKILLPHSEKYTAIRREQHEKI</sequence>
<organism>
    <name type="scientific">Azobacteroides pseudotrichonymphae genomovar. CFP2</name>
    <dbReference type="NCBI Taxonomy" id="511995"/>
    <lineage>
        <taxon>Bacteria</taxon>
        <taxon>Pseudomonadati</taxon>
        <taxon>Bacteroidota</taxon>
        <taxon>Bacteroidia</taxon>
        <taxon>Bacteroidales</taxon>
        <taxon>Candidatus Azobacteroides</taxon>
    </lineage>
</organism>
<protein>
    <recommendedName>
        <fullName evidence="1">Polyribonucleotide nucleotidyltransferase</fullName>
        <ecNumber evidence="1">2.7.7.8</ecNumber>
    </recommendedName>
    <alternativeName>
        <fullName evidence="1">Polynucleotide phosphorylase</fullName>
        <shortName evidence="1">PNPase</shortName>
    </alternativeName>
</protein>
<name>PNP_AZOPC</name>
<keyword id="KW-0963">Cytoplasm</keyword>
<keyword id="KW-0460">Magnesium</keyword>
<keyword id="KW-0479">Metal-binding</keyword>
<keyword id="KW-0548">Nucleotidyltransferase</keyword>
<keyword id="KW-1185">Reference proteome</keyword>
<keyword id="KW-0694">RNA-binding</keyword>
<keyword id="KW-0808">Transferase</keyword>